<name>RLMH_KLEP7</name>
<sequence>MKLQLVAVGTKMPDWVQTGFSEYLRRFPKDMPFELVEIPAGKRGKNADIKRILEKEGEMMLAAAGKNRIVTLDIPGKPWDTPQLARELERWKQDGRDVSLLVGGPEGLSPACKAAAEQSWSLSTLTLPHPLVRVLVAESLYRAWSITTNHPYHRE</sequence>
<comment type="function">
    <text evidence="1">Specifically methylates the pseudouridine at position 1915 (m3Psi1915) in 23S rRNA.</text>
</comment>
<comment type="catalytic activity">
    <reaction evidence="1">
        <text>pseudouridine(1915) in 23S rRNA + S-adenosyl-L-methionine = N(3)-methylpseudouridine(1915) in 23S rRNA + S-adenosyl-L-homocysteine + H(+)</text>
        <dbReference type="Rhea" id="RHEA:42752"/>
        <dbReference type="Rhea" id="RHEA-COMP:10221"/>
        <dbReference type="Rhea" id="RHEA-COMP:10222"/>
        <dbReference type="ChEBI" id="CHEBI:15378"/>
        <dbReference type="ChEBI" id="CHEBI:57856"/>
        <dbReference type="ChEBI" id="CHEBI:59789"/>
        <dbReference type="ChEBI" id="CHEBI:65314"/>
        <dbReference type="ChEBI" id="CHEBI:74486"/>
        <dbReference type="EC" id="2.1.1.177"/>
    </reaction>
</comment>
<comment type="subunit">
    <text evidence="1">Homodimer.</text>
</comment>
<comment type="subcellular location">
    <subcellularLocation>
        <location evidence="1">Cytoplasm</location>
    </subcellularLocation>
</comment>
<comment type="similarity">
    <text evidence="1">Belongs to the RNA methyltransferase RlmH family.</text>
</comment>
<dbReference type="EC" id="2.1.1.177" evidence="1"/>
<dbReference type="EMBL" id="CP000647">
    <property type="protein sequence ID" value="ABR76118.1"/>
    <property type="molecule type" value="Genomic_DNA"/>
</dbReference>
<dbReference type="RefSeq" id="WP_002894620.1">
    <property type="nucleotide sequence ID" value="NC_009648.1"/>
</dbReference>
<dbReference type="SMR" id="A6T697"/>
<dbReference type="STRING" id="272620.KPN_00668"/>
<dbReference type="PaxDb" id="272620-KPN_00668"/>
<dbReference type="EnsemblBacteria" id="ABR76118">
    <property type="protein sequence ID" value="ABR76118"/>
    <property type="gene ID" value="KPN_00668"/>
</dbReference>
<dbReference type="GeneID" id="93274409"/>
<dbReference type="KEGG" id="kpn:KPN_00668"/>
<dbReference type="HOGENOM" id="CLU_100552_1_0_6"/>
<dbReference type="Proteomes" id="UP000000265">
    <property type="component" value="Chromosome"/>
</dbReference>
<dbReference type="GO" id="GO:0005737">
    <property type="term" value="C:cytoplasm"/>
    <property type="evidence" value="ECO:0007669"/>
    <property type="project" value="UniProtKB-SubCell"/>
</dbReference>
<dbReference type="GO" id="GO:0070038">
    <property type="term" value="F:rRNA (pseudouridine-N3-)-methyltransferase activity"/>
    <property type="evidence" value="ECO:0007669"/>
    <property type="project" value="UniProtKB-UniRule"/>
</dbReference>
<dbReference type="CDD" id="cd18081">
    <property type="entry name" value="RlmH-like"/>
    <property type="match status" value="1"/>
</dbReference>
<dbReference type="FunFam" id="3.40.1280.10:FF:000004">
    <property type="entry name" value="Ribosomal RNA large subunit methyltransferase H"/>
    <property type="match status" value="1"/>
</dbReference>
<dbReference type="Gene3D" id="3.40.1280.10">
    <property type="match status" value="1"/>
</dbReference>
<dbReference type="HAMAP" id="MF_00658">
    <property type="entry name" value="23SrRNA_methyltr_H"/>
    <property type="match status" value="1"/>
</dbReference>
<dbReference type="InterPro" id="IPR029028">
    <property type="entry name" value="Alpha/beta_knot_MTases"/>
</dbReference>
<dbReference type="InterPro" id="IPR003742">
    <property type="entry name" value="RlmH-like"/>
</dbReference>
<dbReference type="InterPro" id="IPR029026">
    <property type="entry name" value="tRNA_m1G_MTases_N"/>
</dbReference>
<dbReference type="NCBIfam" id="NF000984">
    <property type="entry name" value="PRK00103.1-1"/>
    <property type="match status" value="1"/>
</dbReference>
<dbReference type="NCBIfam" id="NF000986">
    <property type="entry name" value="PRK00103.1-4"/>
    <property type="match status" value="1"/>
</dbReference>
<dbReference type="NCBIfam" id="TIGR00246">
    <property type="entry name" value="tRNA_RlmH_YbeA"/>
    <property type="match status" value="1"/>
</dbReference>
<dbReference type="PANTHER" id="PTHR33603">
    <property type="entry name" value="METHYLTRANSFERASE"/>
    <property type="match status" value="1"/>
</dbReference>
<dbReference type="PANTHER" id="PTHR33603:SF1">
    <property type="entry name" value="RIBOSOMAL RNA LARGE SUBUNIT METHYLTRANSFERASE H"/>
    <property type="match status" value="1"/>
</dbReference>
<dbReference type="Pfam" id="PF02590">
    <property type="entry name" value="SPOUT_MTase"/>
    <property type="match status" value="1"/>
</dbReference>
<dbReference type="PIRSF" id="PIRSF004505">
    <property type="entry name" value="MT_bac"/>
    <property type="match status" value="1"/>
</dbReference>
<dbReference type="SUPFAM" id="SSF75217">
    <property type="entry name" value="alpha/beta knot"/>
    <property type="match status" value="1"/>
</dbReference>
<feature type="chain" id="PRO_1000061792" description="Ribosomal RNA large subunit methyltransferase H">
    <location>
        <begin position="1"/>
        <end position="155"/>
    </location>
</feature>
<feature type="binding site" evidence="1">
    <location>
        <position position="72"/>
    </location>
    <ligand>
        <name>S-adenosyl-L-methionine</name>
        <dbReference type="ChEBI" id="CHEBI:59789"/>
    </ligand>
</feature>
<feature type="binding site" evidence="1">
    <location>
        <position position="103"/>
    </location>
    <ligand>
        <name>S-adenosyl-L-methionine</name>
        <dbReference type="ChEBI" id="CHEBI:59789"/>
    </ligand>
</feature>
<feature type="binding site" evidence="1">
    <location>
        <begin position="122"/>
        <end position="127"/>
    </location>
    <ligand>
        <name>S-adenosyl-L-methionine</name>
        <dbReference type="ChEBI" id="CHEBI:59789"/>
    </ligand>
</feature>
<organism>
    <name type="scientific">Klebsiella pneumoniae subsp. pneumoniae (strain ATCC 700721 / MGH 78578)</name>
    <dbReference type="NCBI Taxonomy" id="272620"/>
    <lineage>
        <taxon>Bacteria</taxon>
        <taxon>Pseudomonadati</taxon>
        <taxon>Pseudomonadota</taxon>
        <taxon>Gammaproteobacteria</taxon>
        <taxon>Enterobacterales</taxon>
        <taxon>Enterobacteriaceae</taxon>
        <taxon>Klebsiella/Raoultella group</taxon>
        <taxon>Klebsiella</taxon>
        <taxon>Klebsiella pneumoniae complex</taxon>
    </lineage>
</organism>
<reference key="1">
    <citation type="submission" date="2006-09" db="EMBL/GenBank/DDBJ databases">
        <authorList>
            <consortium name="The Klebsiella pneumonia Genome Sequencing Project"/>
            <person name="McClelland M."/>
            <person name="Sanderson E.K."/>
            <person name="Spieth J."/>
            <person name="Clifton W.S."/>
            <person name="Latreille P."/>
            <person name="Sabo A."/>
            <person name="Pepin K."/>
            <person name="Bhonagiri V."/>
            <person name="Porwollik S."/>
            <person name="Ali J."/>
            <person name="Wilson R.K."/>
        </authorList>
    </citation>
    <scope>NUCLEOTIDE SEQUENCE [LARGE SCALE GENOMIC DNA]</scope>
    <source>
        <strain>ATCC 700721 / MGH 78578</strain>
    </source>
</reference>
<evidence type="ECO:0000255" key="1">
    <source>
        <dbReference type="HAMAP-Rule" id="MF_00658"/>
    </source>
</evidence>
<accession>A6T697</accession>
<gene>
    <name evidence="1" type="primary">rlmH</name>
    <name type="ordered locus">KPN78578_06570</name>
    <name type="ORF">KPN_00668</name>
</gene>
<keyword id="KW-0963">Cytoplasm</keyword>
<keyword id="KW-0489">Methyltransferase</keyword>
<keyword id="KW-0698">rRNA processing</keyword>
<keyword id="KW-0949">S-adenosyl-L-methionine</keyword>
<keyword id="KW-0808">Transferase</keyword>
<proteinExistence type="inferred from homology"/>
<protein>
    <recommendedName>
        <fullName evidence="1">Ribosomal RNA large subunit methyltransferase H</fullName>
        <ecNumber evidence="1">2.1.1.177</ecNumber>
    </recommendedName>
    <alternativeName>
        <fullName evidence="1">23S rRNA (pseudouridine1915-N3)-methyltransferase</fullName>
    </alternativeName>
    <alternativeName>
        <fullName evidence="1">23S rRNA m3Psi1915 methyltransferase</fullName>
    </alternativeName>
    <alternativeName>
        <fullName evidence="1">rRNA (pseudouridine-N3-)-methyltransferase RlmH</fullName>
    </alternativeName>
</protein>